<gene>
    <name evidence="1" type="primary">recA</name>
    <name type="ordered locus">Xfasm12_0100</name>
</gene>
<name>RECA_XYLFM</name>
<protein>
    <recommendedName>
        <fullName evidence="1">Protein RecA</fullName>
    </recommendedName>
    <alternativeName>
        <fullName evidence="1">Recombinase A</fullName>
    </alternativeName>
</protein>
<proteinExistence type="inferred from homology"/>
<accession>B0U1K8</accession>
<comment type="function">
    <text evidence="1">Can catalyze the hydrolysis of ATP in the presence of single-stranded DNA, the ATP-dependent uptake of single-stranded DNA by duplex DNA, and the ATP-dependent hybridization of homologous single-stranded DNAs. It interacts with LexA causing its activation and leading to its autocatalytic cleavage.</text>
</comment>
<comment type="subcellular location">
    <subcellularLocation>
        <location evidence="1">Cytoplasm</location>
    </subcellularLocation>
</comment>
<comment type="similarity">
    <text evidence="1">Belongs to the RecA family.</text>
</comment>
<evidence type="ECO:0000255" key="1">
    <source>
        <dbReference type="HAMAP-Rule" id="MF_00268"/>
    </source>
</evidence>
<evidence type="ECO:0000256" key="2">
    <source>
        <dbReference type="SAM" id="MobiDB-lite"/>
    </source>
</evidence>
<sequence length="347" mass="37566">MDENKKRALSVALSQIEKQFGKGSVMRMGDRVIEAVEAIPTGSLMLDLALGIGGLPKGRVVEIYGPESSGKTTLTLQAIAQCQKKGGTAAFIDAEHALDPIYAGKLGVNVDDLLLSQPDTGEQALEIADMLVRSGSIDIMVIDSVAALTPKAEIEGEMGDQLPGLQARLMSQALRKLTGNIKRSNTLVIFINQLRMKIGIMMPGQSPETTTGGNALKFYASVRLDIRRIGAIKKGDEIIGNQTKIKVVKNKLAPPFKQVVTEILYGEGISREGELIEMGVEAKLVEKAGAWYSYGGERIGQGKDNARGYLRENPHLAAKLEADLREKFEPTELSREEGDEDTLEDAM</sequence>
<dbReference type="EMBL" id="CP000941">
    <property type="protein sequence ID" value="ACA11140.1"/>
    <property type="molecule type" value="Genomic_DNA"/>
</dbReference>
<dbReference type="RefSeq" id="WP_012337558.1">
    <property type="nucleotide sequence ID" value="NC_010513.1"/>
</dbReference>
<dbReference type="SMR" id="B0U1K8"/>
<dbReference type="KEGG" id="xfm:Xfasm12_0100"/>
<dbReference type="HOGENOM" id="CLU_040469_3_2_6"/>
<dbReference type="GO" id="GO:0005829">
    <property type="term" value="C:cytosol"/>
    <property type="evidence" value="ECO:0007669"/>
    <property type="project" value="TreeGrafter"/>
</dbReference>
<dbReference type="GO" id="GO:0005524">
    <property type="term" value="F:ATP binding"/>
    <property type="evidence" value="ECO:0007669"/>
    <property type="project" value="UniProtKB-UniRule"/>
</dbReference>
<dbReference type="GO" id="GO:0016887">
    <property type="term" value="F:ATP hydrolysis activity"/>
    <property type="evidence" value="ECO:0007669"/>
    <property type="project" value="InterPro"/>
</dbReference>
<dbReference type="GO" id="GO:0140664">
    <property type="term" value="F:ATP-dependent DNA damage sensor activity"/>
    <property type="evidence" value="ECO:0007669"/>
    <property type="project" value="InterPro"/>
</dbReference>
<dbReference type="GO" id="GO:0003684">
    <property type="term" value="F:damaged DNA binding"/>
    <property type="evidence" value="ECO:0007669"/>
    <property type="project" value="UniProtKB-UniRule"/>
</dbReference>
<dbReference type="GO" id="GO:0003697">
    <property type="term" value="F:single-stranded DNA binding"/>
    <property type="evidence" value="ECO:0007669"/>
    <property type="project" value="UniProtKB-UniRule"/>
</dbReference>
<dbReference type="GO" id="GO:0006310">
    <property type="term" value="P:DNA recombination"/>
    <property type="evidence" value="ECO:0007669"/>
    <property type="project" value="UniProtKB-UniRule"/>
</dbReference>
<dbReference type="GO" id="GO:0006281">
    <property type="term" value="P:DNA repair"/>
    <property type="evidence" value="ECO:0007669"/>
    <property type="project" value="UniProtKB-UniRule"/>
</dbReference>
<dbReference type="GO" id="GO:0009432">
    <property type="term" value="P:SOS response"/>
    <property type="evidence" value="ECO:0007669"/>
    <property type="project" value="UniProtKB-UniRule"/>
</dbReference>
<dbReference type="CDD" id="cd00983">
    <property type="entry name" value="RecA"/>
    <property type="match status" value="1"/>
</dbReference>
<dbReference type="FunFam" id="3.40.50.300:FF:000087">
    <property type="entry name" value="Recombinase RecA"/>
    <property type="match status" value="1"/>
</dbReference>
<dbReference type="Gene3D" id="3.40.50.300">
    <property type="entry name" value="P-loop containing nucleotide triphosphate hydrolases"/>
    <property type="match status" value="1"/>
</dbReference>
<dbReference type="HAMAP" id="MF_00268">
    <property type="entry name" value="RecA"/>
    <property type="match status" value="1"/>
</dbReference>
<dbReference type="InterPro" id="IPR003593">
    <property type="entry name" value="AAA+_ATPase"/>
</dbReference>
<dbReference type="InterPro" id="IPR013765">
    <property type="entry name" value="DNA_recomb/repair_RecA"/>
</dbReference>
<dbReference type="InterPro" id="IPR020584">
    <property type="entry name" value="DNA_recomb/repair_RecA_CS"/>
</dbReference>
<dbReference type="InterPro" id="IPR027417">
    <property type="entry name" value="P-loop_NTPase"/>
</dbReference>
<dbReference type="InterPro" id="IPR049261">
    <property type="entry name" value="RecA-like_C"/>
</dbReference>
<dbReference type="InterPro" id="IPR049428">
    <property type="entry name" value="RecA-like_N"/>
</dbReference>
<dbReference type="InterPro" id="IPR020588">
    <property type="entry name" value="RecA_ATP-bd"/>
</dbReference>
<dbReference type="InterPro" id="IPR023400">
    <property type="entry name" value="RecA_C_sf"/>
</dbReference>
<dbReference type="InterPro" id="IPR020587">
    <property type="entry name" value="RecA_monomer-monomer_interface"/>
</dbReference>
<dbReference type="NCBIfam" id="TIGR02012">
    <property type="entry name" value="tigrfam_recA"/>
    <property type="match status" value="1"/>
</dbReference>
<dbReference type="PANTHER" id="PTHR45900:SF1">
    <property type="entry name" value="MITOCHONDRIAL DNA REPAIR PROTEIN RECA HOMOLOG-RELATED"/>
    <property type="match status" value="1"/>
</dbReference>
<dbReference type="PANTHER" id="PTHR45900">
    <property type="entry name" value="RECA"/>
    <property type="match status" value="1"/>
</dbReference>
<dbReference type="Pfam" id="PF00154">
    <property type="entry name" value="RecA"/>
    <property type="match status" value="1"/>
</dbReference>
<dbReference type="Pfam" id="PF21096">
    <property type="entry name" value="RecA_C"/>
    <property type="match status" value="1"/>
</dbReference>
<dbReference type="PRINTS" id="PR00142">
    <property type="entry name" value="RECA"/>
</dbReference>
<dbReference type="SMART" id="SM00382">
    <property type="entry name" value="AAA"/>
    <property type="match status" value="1"/>
</dbReference>
<dbReference type="SUPFAM" id="SSF52540">
    <property type="entry name" value="P-loop containing nucleoside triphosphate hydrolases"/>
    <property type="match status" value="1"/>
</dbReference>
<dbReference type="SUPFAM" id="SSF54752">
    <property type="entry name" value="RecA protein, C-terminal domain"/>
    <property type="match status" value="1"/>
</dbReference>
<dbReference type="PROSITE" id="PS00321">
    <property type="entry name" value="RECA_1"/>
    <property type="match status" value="1"/>
</dbReference>
<dbReference type="PROSITE" id="PS50162">
    <property type="entry name" value="RECA_2"/>
    <property type="match status" value="1"/>
</dbReference>
<dbReference type="PROSITE" id="PS50163">
    <property type="entry name" value="RECA_3"/>
    <property type="match status" value="1"/>
</dbReference>
<feature type="chain" id="PRO_1000114385" description="Protein RecA">
    <location>
        <begin position="1"/>
        <end position="347"/>
    </location>
</feature>
<feature type="region of interest" description="Disordered" evidence="2">
    <location>
        <begin position="327"/>
        <end position="347"/>
    </location>
</feature>
<feature type="compositionally biased region" description="Basic and acidic residues" evidence="2">
    <location>
        <begin position="327"/>
        <end position="336"/>
    </location>
</feature>
<feature type="compositionally biased region" description="Acidic residues" evidence="2">
    <location>
        <begin position="337"/>
        <end position="347"/>
    </location>
</feature>
<feature type="binding site" evidence="1">
    <location>
        <begin position="65"/>
        <end position="72"/>
    </location>
    <ligand>
        <name>ATP</name>
        <dbReference type="ChEBI" id="CHEBI:30616"/>
    </ligand>
</feature>
<keyword id="KW-0067">ATP-binding</keyword>
<keyword id="KW-0963">Cytoplasm</keyword>
<keyword id="KW-0227">DNA damage</keyword>
<keyword id="KW-0233">DNA recombination</keyword>
<keyword id="KW-0234">DNA repair</keyword>
<keyword id="KW-0238">DNA-binding</keyword>
<keyword id="KW-0547">Nucleotide-binding</keyword>
<keyword id="KW-0742">SOS response</keyword>
<reference key="1">
    <citation type="journal article" date="2010" name="J. Bacteriol.">
        <title>Whole genome sequences of two Xylella fastidiosa strains (M12 and M23) causing almond leaf scorch disease in California.</title>
        <authorList>
            <person name="Chen J."/>
            <person name="Xie G."/>
            <person name="Han S."/>
            <person name="Chertkov O."/>
            <person name="Sims D."/>
            <person name="Civerolo E.L."/>
        </authorList>
    </citation>
    <scope>NUCLEOTIDE SEQUENCE [LARGE SCALE GENOMIC DNA]</scope>
    <source>
        <strain>M12</strain>
    </source>
</reference>
<organism>
    <name type="scientific">Xylella fastidiosa (strain M12)</name>
    <dbReference type="NCBI Taxonomy" id="405440"/>
    <lineage>
        <taxon>Bacteria</taxon>
        <taxon>Pseudomonadati</taxon>
        <taxon>Pseudomonadota</taxon>
        <taxon>Gammaproteobacteria</taxon>
        <taxon>Lysobacterales</taxon>
        <taxon>Lysobacteraceae</taxon>
        <taxon>Xylella</taxon>
    </lineage>
</organism>